<reference key="1">
    <citation type="journal article" date="2006" name="Nature">
        <title>Human chromosome 11 DNA sequence and analysis including novel gene identification.</title>
        <authorList>
            <person name="Taylor T.D."/>
            <person name="Noguchi H."/>
            <person name="Totoki Y."/>
            <person name="Toyoda A."/>
            <person name="Kuroki Y."/>
            <person name="Dewar K."/>
            <person name="Lloyd C."/>
            <person name="Itoh T."/>
            <person name="Takeda T."/>
            <person name="Kim D.-W."/>
            <person name="She X."/>
            <person name="Barlow K.F."/>
            <person name="Bloom T."/>
            <person name="Bruford E."/>
            <person name="Chang J.L."/>
            <person name="Cuomo C.A."/>
            <person name="Eichler E."/>
            <person name="FitzGerald M.G."/>
            <person name="Jaffe D.B."/>
            <person name="LaButti K."/>
            <person name="Nicol R."/>
            <person name="Park H.-S."/>
            <person name="Seaman C."/>
            <person name="Sougnez C."/>
            <person name="Yang X."/>
            <person name="Zimmer A.R."/>
            <person name="Zody M.C."/>
            <person name="Birren B.W."/>
            <person name="Nusbaum C."/>
            <person name="Fujiyama A."/>
            <person name="Hattori M."/>
            <person name="Rogers J."/>
            <person name="Lander E.S."/>
            <person name="Sakaki Y."/>
        </authorList>
    </citation>
    <scope>NUCLEOTIDE SEQUENCE [LARGE SCALE GENOMIC DNA]</scope>
</reference>
<reference key="2">
    <citation type="submission" date="2001-06" db="EMBL/GenBank/DDBJ databases">
        <title>Sequencing of human neurexin II gene.</title>
        <authorList>
            <person name="Rowen L."/>
            <person name="Madan A."/>
            <person name="Qin S."/>
            <person name="Baradarani L."/>
            <person name="Birditt B."/>
            <person name="Bloom S."/>
            <person name="Burke J."/>
            <person name="Dors M."/>
            <person name="Fleetwood P."/>
            <person name="Kaur A."/>
            <person name="Madan A."/>
            <person name="Nesbitt R."/>
            <person name="Pate D."/>
            <person name="Hood L."/>
        </authorList>
    </citation>
    <scope>NUCLEOTIDE SEQUENCE [GENOMIC DNA] OF 90-666</scope>
</reference>
<sequence length="666" mass="70927">MPPGGSGPGGCPRRPPALAGPLPPPPPPPPPPLLPLLPLLLLLLLGAAEGARVSSSLSTTHHVHHFHSKHGTVPIAINRMPFLTRGGHAGTTYIFGKGGALITYTWPPNDRPSTRMDRLAVGFSTHQRSAVLVRVDSASGLGDYLQLHIDQGTVGVIFNVGTDDITIDEPNAIVSDGKYHVVRFTRSGGNATLQVDSWPVNERYPAGNFDNERLAIARQRIPYRLGRVVDEWLLDKGRQLTIFNSQAAIKIGGRDQGRPFQGQVSGLYYNGLKVLALAAESDPNVRTEGHLRLVGEGPSVLLSAETTATTLLADMATTIMETTTTMATTTTRRGRSPTLRDSTTQNTDDLLVASAECPSDDEDLEECEPSTGGELILPIITEDSLDPPPVATRSPFVPPPPTFYPFLTGVGATQDTLPPPAARRPPSGGPCQAERDDSDCEEPIEASGFASGEVFDSSLPPTDDEDFYTTFPLVTDRTTLLSPRKPAPRPNLRTDGATGAPGVLFAPSAPAPNLPAGKMNHRDPLQPLLENPPLGPGAPTSFEPRRPPPLRPGVTSAPGFPHLPTANPTGPGERGPPGAVEVIRESSSTTGMVVGIVAAAALCILILLYAMYKYRNRDEGSYQVDQSRNYISNSAQSNGAVVKEKAPAAPKTPSKAKKNKDKEYYV</sequence>
<keyword id="KW-0002">3D-structure</keyword>
<keyword id="KW-0877">Alternative promoter usage</keyword>
<keyword id="KW-0025">Alternative splicing</keyword>
<keyword id="KW-0106">Calcium</keyword>
<keyword id="KW-0130">Cell adhesion</keyword>
<keyword id="KW-1003">Cell membrane</keyword>
<keyword id="KW-0966">Cell projection</keyword>
<keyword id="KW-0325">Glycoprotein</keyword>
<keyword id="KW-0357">Heparan sulfate</keyword>
<keyword id="KW-0472">Membrane</keyword>
<keyword id="KW-0479">Metal-binding</keyword>
<keyword id="KW-0654">Proteoglycan</keyword>
<keyword id="KW-1267">Proteomics identification</keyword>
<keyword id="KW-1185">Reference proteome</keyword>
<keyword id="KW-0677">Repeat</keyword>
<keyword id="KW-0732">Signal</keyword>
<keyword id="KW-0770">Synapse</keyword>
<keyword id="KW-0812">Transmembrane</keyword>
<keyword id="KW-1133">Transmembrane helix</keyword>
<proteinExistence type="evidence at protein level"/>
<protein>
    <recommendedName>
        <fullName>Neurexin-2-beta</fullName>
    </recommendedName>
    <alternativeName>
        <fullName>Neurexin II-beta</fullName>
    </alternativeName>
</protein>
<comment type="function">
    <text>Neuronal cell surface protein that may be involved in cell recognition and cell adhesion.</text>
</comment>
<comment type="subunit">
    <text evidence="2 4">Interacts (via cytoplasmic C-terminal region) with CASK (By similarity). Specific isoforms bind alpha-dystroglycan and neuroligins NLGN1, NLGN2 and NLGN3 (By similarity). Interacts with CBLN1, CBLN2 and, less avidly, with CBLN4 (By similarity). Interacts with CLSTN3 (By similarity).</text>
</comment>
<comment type="subcellular location">
    <subcellularLocation>
        <location evidence="8">Presynaptic cell membrane</location>
        <topology evidence="5">Single-pass type I membrane protein</topology>
    </subcellularLocation>
</comment>
<comment type="alternative products">
    <event type="alternative promoter"/>
    <event type="alternative splicing"/>
    <isoform>
        <id>P58401-1</id>
        <name>1b</name>
        <sequence type="displayed"/>
    </isoform>
    <isoform>
        <id>Q9P2S2-1</id>
        <name>1a</name>
        <sequence type="external"/>
    </isoform>
    <isoform>
        <id>Q9P2S2-2</id>
        <name>2a</name>
        <name>Alpha-2B</name>
        <sequence type="external"/>
    </isoform>
    <text>A number of isoforms, alpha-type and beta-type are produced by alternative promoter usage. Beta-type isoforms differ from alpha-type isoforms in their N-terminus. Additional isoforms produced by alternative splicing seem to exist.</text>
</comment>
<comment type="domain">
    <text>Alternative splicing in the laminin G-like domain regulates binding to alpha-dystroglycan.</text>
</comment>
<comment type="PTM">
    <text evidence="1">O-glycosylated; contains heparan sulfate. Heparan sulfate attachment is required for synapse development by mediating interactions with neuroligins.</text>
</comment>
<comment type="similarity">
    <text evidence="8">Belongs to the neurexin family.</text>
</comment>
<evidence type="ECO:0000250" key="1">
    <source>
        <dbReference type="UniProtKB" id="E9PUN2"/>
    </source>
</evidence>
<evidence type="ECO:0000250" key="2">
    <source>
        <dbReference type="UniProtKB" id="E9Q7X7"/>
    </source>
</evidence>
<evidence type="ECO:0000250" key="3">
    <source>
        <dbReference type="UniProtKB" id="Q63373"/>
    </source>
</evidence>
<evidence type="ECO:0000250" key="4">
    <source>
        <dbReference type="UniProtKB" id="Q63376"/>
    </source>
</evidence>
<evidence type="ECO:0000255" key="5"/>
<evidence type="ECO:0000255" key="6">
    <source>
        <dbReference type="PROSITE-ProRule" id="PRU00122"/>
    </source>
</evidence>
<evidence type="ECO:0000256" key="7">
    <source>
        <dbReference type="SAM" id="MobiDB-lite"/>
    </source>
</evidence>
<evidence type="ECO:0000305" key="8"/>
<evidence type="ECO:0007829" key="9">
    <source>
        <dbReference type="PDB" id="4NXR"/>
    </source>
</evidence>
<organism>
    <name type="scientific">Homo sapiens</name>
    <name type="common">Human</name>
    <dbReference type="NCBI Taxonomy" id="9606"/>
    <lineage>
        <taxon>Eukaryota</taxon>
        <taxon>Metazoa</taxon>
        <taxon>Chordata</taxon>
        <taxon>Craniata</taxon>
        <taxon>Vertebrata</taxon>
        <taxon>Euteleostomi</taxon>
        <taxon>Mammalia</taxon>
        <taxon>Eutheria</taxon>
        <taxon>Euarchontoglires</taxon>
        <taxon>Primates</taxon>
        <taxon>Haplorrhini</taxon>
        <taxon>Catarrhini</taxon>
        <taxon>Hominidae</taxon>
        <taxon>Homo</taxon>
    </lineage>
</organism>
<gene>
    <name type="primary">NRXN2</name>
</gene>
<accession>P58401</accession>
<feature type="signal peptide" evidence="4">
    <location>
        <begin position="1"/>
        <end position="50"/>
    </location>
</feature>
<feature type="chain" id="PRO_0000019497" description="Neurexin-2-beta">
    <location>
        <begin position="51"/>
        <end position="666"/>
    </location>
</feature>
<feature type="topological domain" description="Extracellular" evidence="5">
    <location>
        <begin position="51"/>
        <end position="590"/>
    </location>
</feature>
<feature type="transmembrane region" description="Helical" evidence="5">
    <location>
        <begin position="591"/>
        <end position="611"/>
    </location>
</feature>
<feature type="topological domain" description="Cytoplasmic" evidence="5">
    <location>
        <begin position="612"/>
        <end position="666"/>
    </location>
</feature>
<feature type="domain" description="Laminin G-like" evidence="6">
    <location>
        <begin position="91"/>
        <end position="299"/>
    </location>
</feature>
<feature type="region of interest" description="Disordered" evidence="7">
    <location>
        <begin position="1"/>
        <end position="30"/>
    </location>
</feature>
<feature type="region of interest" description="Disordered" evidence="7">
    <location>
        <begin position="327"/>
        <end position="346"/>
    </location>
</feature>
<feature type="region of interest" description="Disordered" evidence="7">
    <location>
        <begin position="412"/>
        <end position="443"/>
    </location>
</feature>
<feature type="region of interest" description="Disordered" evidence="7">
    <location>
        <begin position="479"/>
        <end position="580"/>
    </location>
</feature>
<feature type="region of interest" description="Disordered" evidence="7">
    <location>
        <begin position="633"/>
        <end position="666"/>
    </location>
</feature>
<feature type="compositionally biased region" description="Gly residues" evidence="7">
    <location>
        <begin position="1"/>
        <end position="10"/>
    </location>
</feature>
<feature type="compositionally biased region" description="Pro residues" evidence="7">
    <location>
        <begin position="21"/>
        <end position="30"/>
    </location>
</feature>
<feature type="binding site" evidence="3">
    <location>
        <position position="143"/>
    </location>
    <ligand>
        <name>Ca(2+)</name>
        <dbReference type="ChEBI" id="CHEBI:29108"/>
    </ligand>
</feature>
<feature type="binding site" evidence="3">
    <location>
        <position position="160"/>
    </location>
    <ligand>
        <name>Ca(2+)</name>
        <dbReference type="ChEBI" id="CHEBI:29108"/>
    </ligand>
</feature>
<feature type="binding site" evidence="3">
    <location>
        <position position="242"/>
    </location>
    <ligand>
        <name>Ca(2+)</name>
        <dbReference type="ChEBI" id="CHEBI:29108"/>
    </ligand>
</feature>
<feature type="binding site" evidence="3">
    <location>
        <position position="244"/>
    </location>
    <ligand>
        <name>Ca(2+)</name>
        <dbReference type="ChEBI" id="CHEBI:29108"/>
    </ligand>
</feature>
<feature type="glycosylation site" description="N-linked (GlcNAc...) asparagine" evidence="5">
    <location>
        <position position="190"/>
    </location>
</feature>
<feature type="glycosylation site" description="O-linked (Xyl...) (heparan sulfate) serine" evidence="1">
    <location>
        <position position="354"/>
    </location>
</feature>
<feature type="strand" evidence="9">
    <location>
        <begin position="660"/>
        <end position="665"/>
    </location>
</feature>
<dbReference type="EMBL" id="AP001092">
    <property type="status" value="NOT_ANNOTATED_CDS"/>
    <property type="molecule type" value="Genomic_DNA"/>
</dbReference>
<dbReference type="EMBL" id="AC044790">
    <property type="status" value="NOT_ANNOTATED_CDS"/>
    <property type="molecule type" value="Genomic_DNA"/>
</dbReference>
<dbReference type="CCDS" id="CCDS8078.1">
    <molecule id="P58401-1"/>
</dbReference>
<dbReference type="RefSeq" id="NP_620063.1">
    <molecule id="P58401-1"/>
    <property type="nucleotide sequence ID" value="NM_138734.3"/>
</dbReference>
<dbReference type="PDB" id="4NXR">
    <property type="method" value="X-ray"/>
    <property type="resolution" value="1.90 A"/>
    <property type="chains" value="B=659-666"/>
</dbReference>
<dbReference type="PDBsum" id="4NXR"/>
<dbReference type="SMR" id="P58401"/>
<dbReference type="BioGRID" id="114780">
    <property type="interactions" value="9"/>
</dbReference>
<dbReference type="IntAct" id="P58401">
    <property type="interactions" value="1"/>
</dbReference>
<dbReference type="MINT" id="P58401"/>
<dbReference type="GlyCosmos" id="P58401">
    <property type="glycosylation" value="1 site, No reported glycans"/>
</dbReference>
<dbReference type="BioMuta" id="NRXN2"/>
<dbReference type="DMDM" id="17368287"/>
<dbReference type="MassIVE" id="P58401"/>
<dbReference type="PeptideAtlas" id="P58401"/>
<dbReference type="ProteomicsDB" id="57072">
    <molecule id="P58401-1"/>
</dbReference>
<dbReference type="TopDownProteomics" id="P58401-1">
    <molecule id="P58401-1"/>
</dbReference>
<dbReference type="Antibodypedia" id="63686">
    <property type="antibodies" value="43 antibodies from 7 providers"/>
</dbReference>
<dbReference type="DNASU" id="9379"/>
<dbReference type="Ensembl" id="ENST00000301894.6">
    <molecule id="P58401-1"/>
    <property type="protein sequence ID" value="ENSP00000301894.2"/>
    <property type="gene ID" value="ENSG00000110076.21"/>
</dbReference>
<dbReference type="GeneID" id="9379"/>
<dbReference type="UCSC" id="uc001oap.3">
    <molecule id="P58401-1"/>
    <property type="organism name" value="human"/>
</dbReference>
<dbReference type="AGR" id="HGNC:8009"/>
<dbReference type="CTD" id="9379"/>
<dbReference type="DisGeNET" id="9379"/>
<dbReference type="GeneCards" id="NRXN2"/>
<dbReference type="HGNC" id="HGNC:8009">
    <property type="gene designation" value="NRXN2"/>
</dbReference>
<dbReference type="HPA" id="ENSG00000110076">
    <property type="expression patterns" value="Tissue enriched (brain)"/>
</dbReference>
<dbReference type="MalaCards" id="NRXN2"/>
<dbReference type="MIM" id="600566">
    <property type="type" value="gene"/>
</dbReference>
<dbReference type="neXtProt" id="NX_P58401"/>
<dbReference type="OpenTargets" id="ENSG00000110076"/>
<dbReference type="PharmGKB" id="PA31787"/>
<dbReference type="VEuPathDB" id="HostDB:ENSG00000110076"/>
<dbReference type="GeneTree" id="ENSGT00940000155978"/>
<dbReference type="HOGENOM" id="CLU_025785_2_0_1"/>
<dbReference type="OrthoDB" id="5989513at2759"/>
<dbReference type="PathwayCommons" id="P58401"/>
<dbReference type="Reactome" id="R-HSA-6794361">
    <property type="pathway name" value="Neurexins and neuroligins"/>
</dbReference>
<dbReference type="SignaLink" id="P58401"/>
<dbReference type="SIGNOR" id="P58401"/>
<dbReference type="BioGRID-ORCS" id="9379">
    <property type="hits" value="16 hits in 1149 CRISPR screens"/>
</dbReference>
<dbReference type="ChiTaRS" id="NRXN2">
    <property type="organism name" value="human"/>
</dbReference>
<dbReference type="EvolutionaryTrace" id="P58401"/>
<dbReference type="GeneWiki" id="NRXN2"/>
<dbReference type="GenomeRNAi" id="9379"/>
<dbReference type="Pharos" id="P58401">
    <property type="development level" value="Tbio"/>
</dbReference>
<dbReference type="Proteomes" id="UP000005640">
    <property type="component" value="Chromosome 11"/>
</dbReference>
<dbReference type="Bgee" id="ENSG00000110076">
    <property type="expression patterns" value="Expressed in right hemisphere of cerebellum and 139 other cell types or tissues"/>
</dbReference>
<dbReference type="ExpressionAtlas" id="P58401">
    <property type="expression patterns" value="baseline and differential"/>
</dbReference>
<dbReference type="GO" id="GO:0042995">
    <property type="term" value="C:cell projection"/>
    <property type="evidence" value="ECO:0007669"/>
    <property type="project" value="UniProtKB-KW"/>
</dbReference>
<dbReference type="GO" id="GO:0005886">
    <property type="term" value="C:plasma membrane"/>
    <property type="evidence" value="ECO:0000304"/>
    <property type="project" value="Reactome"/>
</dbReference>
<dbReference type="GO" id="GO:0042734">
    <property type="term" value="C:presynaptic membrane"/>
    <property type="evidence" value="ECO:0007669"/>
    <property type="project" value="UniProtKB-SubCell"/>
</dbReference>
<dbReference type="GO" id="GO:0050839">
    <property type="term" value="F:cell adhesion molecule binding"/>
    <property type="evidence" value="ECO:0000304"/>
    <property type="project" value="BHF-UCL"/>
</dbReference>
<dbReference type="GO" id="GO:0046872">
    <property type="term" value="F:metal ion binding"/>
    <property type="evidence" value="ECO:0007669"/>
    <property type="project" value="UniProtKB-KW"/>
</dbReference>
<dbReference type="GO" id="GO:0097109">
    <property type="term" value="F:neuroligin family protein binding"/>
    <property type="evidence" value="ECO:0000304"/>
    <property type="project" value="BHF-UCL"/>
</dbReference>
<dbReference type="GO" id="GO:0004888">
    <property type="term" value="F:transmembrane signaling receptor activity"/>
    <property type="evidence" value="ECO:0000303"/>
    <property type="project" value="BHF-UCL"/>
</dbReference>
<dbReference type="GO" id="GO:0007158">
    <property type="term" value="P:neuron cell-cell adhesion"/>
    <property type="evidence" value="ECO:0000304"/>
    <property type="project" value="BHF-UCL"/>
</dbReference>
<dbReference type="GO" id="GO:0007165">
    <property type="term" value="P:signal transduction"/>
    <property type="evidence" value="ECO:0000303"/>
    <property type="project" value="BHF-UCL"/>
</dbReference>
<dbReference type="CDD" id="cd00110">
    <property type="entry name" value="LamG"/>
    <property type="match status" value="1"/>
</dbReference>
<dbReference type="FunFam" id="2.60.120.200:FF:000003">
    <property type="entry name" value="neurexin-1 isoform X1"/>
    <property type="match status" value="1"/>
</dbReference>
<dbReference type="Gene3D" id="2.60.120.200">
    <property type="match status" value="1"/>
</dbReference>
<dbReference type="InterPro" id="IPR013320">
    <property type="entry name" value="ConA-like_dom_sf"/>
</dbReference>
<dbReference type="InterPro" id="IPR001791">
    <property type="entry name" value="Laminin_G"/>
</dbReference>
<dbReference type="InterPro" id="IPR003585">
    <property type="entry name" value="Neurexin-like"/>
</dbReference>
<dbReference type="InterPro" id="IPR050372">
    <property type="entry name" value="Neurexin-related_CASP"/>
</dbReference>
<dbReference type="PANTHER" id="PTHR15036:SF52">
    <property type="entry name" value="NEUREXIN-2"/>
    <property type="match status" value="1"/>
</dbReference>
<dbReference type="PANTHER" id="PTHR15036">
    <property type="entry name" value="PIKACHURIN-LIKE PROTEIN"/>
    <property type="match status" value="1"/>
</dbReference>
<dbReference type="Pfam" id="PF02210">
    <property type="entry name" value="Laminin_G_2"/>
    <property type="match status" value="1"/>
</dbReference>
<dbReference type="SMART" id="SM00294">
    <property type="entry name" value="4.1m"/>
    <property type="match status" value="1"/>
</dbReference>
<dbReference type="SMART" id="SM00282">
    <property type="entry name" value="LamG"/>
    <property type="match status" value="1"/>
</dbReference>
<dbReference type="SUPFAM" id="SSF49899">
    <property type="entry name" value="Concanavalin A-like lectins/glucanases"/>
    <property type="match status" value="1"/>
</dbReference>
<dbReference type="PROSITE" id="PS50025">
    <property type="entry name" value="LAM_G_DOMAIN"/>
    <property type="match status" value="1"/>
</dbReference>
<name>NRX2B_HUMAN</name>